<dbReference type="EC" id="6.1.1.23" evidence="1"/>
<dbReference type="EMBL" id="CP000481">
    <property type="protein sequence ID" value="ABK53106.1"/>
    <property type="molecule type" value="Genomic_DNA"/>
</dbReference>
<dbReference type="RefSeq" id="WP_011720169.1">
    <property type="nucleotide sequence ID" value="NC_008578.1"/>
</dbReference>
<dbReference type="SMR" id="A0LUJ6"/>
<dbReference type="FunCoup" id="A0LUJ6">
    <property type="interactions" value="364"/>
</dbReference>
<dbReference type="STRING" id="351607.Acel_1334"/>
<dbReference type="KEGG" id="ace:Acel_1334"/>
<dbReference type="eggNOG" id="COG0173">
    <property type="taxonomic scope" value="Bacteria"/>
</dbReference>
<dbReference type="HOGENOM" id="CLU_014330_3_2_11"/>
<dbReference type="InParanoid" id="A0LUJ6"/>
<dbReference type="OrthoDB" id="9802326at2"/>
<dbReference type="Proteomes" id="UP000008221">
    <property type="component" value="Chromosome"/>
</dbReference>
<dbReference type="GO" id="GO:0005737">
    <property type="term" value="C:cytoplasm"/>
    <property type="evidence" value="ECO:0007669"/>
    <property type="project" value="UniProtKB-SubCell"/>
</dbReference>
<dbReference type="GO" id="GO:0004815">
    <property type="term" value="F:aspartate-tRNA ligase activity"/>
    <property type="evidence" value="ECO:0007669"/>
    <property type="project" value="UniProtKB-UniRule"/>
</dbReference>
<dbReference type="GO" id="GO:0050560">
    <property type="term" value="F:aspartate-tRNA(Asn) ligase activity"/>
    <property type="evidence" value="ECO:0007669"/>
    <property type="project" value="UniProtKB-EC"/>
</dbReference>
<dbReference type="GO" id="GO:0005524">
    <property type="term" value="F:ATP binding"/>
    <property type="evidence" value="ECO:0007669"/>
    <property type="project" value="UniProtKB-UniRule"/>
</dbReference>
<dbReference type="GO" id="GO:0003676">
    <property type="term" value="F:nucleic acid binding"/>
    <property type="evidence" value="ECO:0007669"/>
    <property type="project" value="InterPro"/>
</dbReference>
<dbReference type="GO" id="GO:0006422">
    <property type="term" value="P:aspartyl-tRNA aminoacylation"/>
    <property type="evidence" value="ECO:0007669"/>
    <property type="project" value="UniProtKB-UniRule"/>
</dbReference>
<dbReference type="CDD" id="cd00777">
    <property type="entry name" value="AspRS_core"/>
    <property type="match status" value="1"/>
</dbReference>
<dbReference type="CDD" id="cd04317">
    <property type="entry name" value="EcAspRS_like_N"/>
    <property type="match status" value="1"/>
</dbReference>
<dbReference type="Gene3D" id="3.30.930.10">
    <property type="entry name" value="Bira Bifunctional Protein, Domain 2"/>
    <property type="match status" value="1"/>
</dbReference>
<dbReference type="Gene3D" id="3.30.1360.30">
    <property type="entry name" value="GAD-like domain"/>
    <property type="match status" value="1"/>
</dbReference>
<dbReference type="Gene3D" id="2.40.50.140">
    <property type="entry name" value="Nucleic acid-binding proteins"/>
    <property type="match status" value="1"/>
</dbReference>
<dbReference type="HAMAP" id="MF_00044">
    <property type="entry name" value="Asp_tRNA_synth_type1"/>
    <property type="match status" value="1"/>
</dbReference>
<dbReference type="InterPro" id="IPR004364">
    <property type="entry name" value="Aa-tRNA-synt_II"/>
</dbReference>
<dbReference type="InterPro" id="IPR006195">
    <property type="entry name" value="aa-tRNA-synth_II"/>
</dbReference>
<dbReference type="InterPro" id="IPR045864">
    <property type="entry name" value="aa-tRNA-synth_II/BPL/LPL"/>
</dbReference>
<dbReference type="InterPro" id="IPR004524">
    <property type="entry name" value="Asp-tRNA-ligase_1"/>
</dbReference>
<dbReference type="InterPro" id="IPR047089">
    <property type="entry name" value="Asp-tRNA-ligase_1_N"/>
</dbReference>
<dbReference type="InterPro" id="IPR002312">
    <property type="entry name" value="Asp/Asn-tRNA-synth_IIb"/>
</dbReference>
<dbReference type="InterPro" id="IPR047090">
    <property type="entry name" value="AspRS_core"/>
</dbReference>
<dbReference type="InterPro" id="IPR004115">
    <property type="entry name" value="GAD-like_sf"/>
</dbReference>
<dbReference type="InterPro" id="IPR029351">
    <property type="entry name" value="GAD_dom"/>
</dbReference>
<dbReference type="InterPro" id="IPR012340">
    <property type="entry name" value="NA-bd_OB-fold"/>
</dbReference>
<dbReference type="InterPro" id="IPR004365">
    <property type="entry name" value="NA-bd_OB_tRNA"/>
</dbReference>
<dbReference type="NCBIfam" id="TIGR00459">
    <property type="entry name" value="aspS_bact"/>
    <property type="match status" value="1"/>
</dbReference>
<dbReference type="NCBIfam" id="NF001750">
    <property type="entry name" value="PRK00476.1"/>
    <property type="match status" value="1"/>
</dbReference>
<dbReference type="PANTHER" id="PTHR22594:SF5">
    <property type="entry name" value="ASPARTATE--TRNA LIGASE, MITOCHONDRIAL"/>
    <property type="match status" value="1"/>
</dbReference>
<dbReference type="PANTHER" id="PTHR22594">
    <property type="entry name" value="ASPARTYL/LYSYL-TRNA SYNTHETASE"/>
    <property type="match status" value="1"/>
</dbReference>
<dbReference type="Pfam" id="PF02938">
    <property type="entry name" value="GAD"/>
    <property type="match status" value="1"/>
</dbReference>
<dbReference type="Pfam" id="PF00152">
    <property type="entry name" value="tRNA-synt_2"/>
    <property type="match status" value="1"/>
</dbReference>
<dbReference type="Pfam" id="PF01336">
    <property type="entry name" value="tRNA_anti-codon"/>
    <property type="match status" value="1"/>
</dbReference>
<dbReference type="PRINTS" id="PR01042">
    <property type="entry name" value="TRNASYNTHASP"/>
</dbReference>
<dbReference type="SUPFAM" id="SSF55681">
    <property type="entry name" value="Class II aaRS and biotin synthetases"/>
    <property type="match status" value="1"/>
</dbReference>
<dbReference type="SUPFAM" id="SSF55261">
    <property type="entry name" value="GAD domain-like"/>
    <property type="match status" value="1"/>
</dbReference>
<dbReference type="SUPFAM" id="SSF50249">
    <property type="entry name" value="Nucleic acid-binding proteins"/>
    <property type="match status" value="1"/>
</dbReference>
<dbReference type="PROSITE" id="PS50862">
    <property type="entry name" value="AA_TRNA_LIGASE_II"/>
    <property type="match status" value="1"/>
</dbReference>
<keyword id="KW-0030">Aminoacyl-tRNA synthetase</keyword>
<keyword id="KW-0067">ATP-binding</keyword>
<keyword id="KW-0963">Cytoplasm</keyword>
<keyword id="KW-0436">Ligase</keyword>
<keyword id="KW-0547">Nucleotide-binding</keyword>
<keyword id="KW-0648">Protein biosynthesis</keyword>
<keyword id="KW-1185">Reference proteome</keyword>
<evidence type="ECO:0000255" key="1">
    <source>
        <dbReference type="HAMAP-Rule" id="MF_00044"/>
    </source>
</evidence>
<evidence type="ECO:0000256" key="2">
    <source>
        <dbReference type="SAM" id="MobiDB-lite"/>
    </source>
</evidence>
<accession>A0LUJ6</accession>
<sequence length="592" mass="64481">MIRTHEAGTLRPADAGSRVVLAGWVARRRDLGGVVFLDLRDASGIVQVVAREGVAGQVASRVRAEFCLRVAGEVRLRPAGNENPELETGDVEVVADEIEVLSEAAPLPFPVTGPVEVNEETRLKYRYLDLRRPGPARALRLRSEMNRLAREVMARHRFVEVETPYLTRSTPEGARDFLVPARLQPGHWYALPQSPQLFKQLLMVAGLERYYQLARCFRDEDFRADRQPEFTQLDIEMSFVTEDDVMALAEDVIATLWSQLAGVELALPLPRLTYAEAMRRFGSDKPDLRFGQEIVDLTKFFAGTSLRIFQAPYVGAVVMPGGAGQSRSELDEWTTFARSRGAKGLAYVLVGAELTGPIAKNLSDAERAGLPAATGARPGDAIFFAAGEQRASQELLGAVRLEIARRCRLTDPASGAPAWSLCWIVDPPLFEPDGAGGWTSVHHPFTAPKPEWMDRFADKPGEALAAAYDIVANGNEIGGGSIRIHRADVQQRVFEVLGISEAEANAKFGFLLEAFRYGPPPHGGIAFGWDRIAALLAGVESIRDVIAFPKTASGTDPLTGAPTPITPEQRKEAGIDADPYAAAGRPPGRQSA</sequence>
<organism>
    <name type="scientific">Acidothermus cellulolyticus (strain ATCC 43068 / DSM 8971 / 11B)</name>
    <dbReference type="NCBI Taxonomy" id="351607"/>
    <lineage>
        <taxon>Bacteria</taxon>
        <taxon>Bacillati</taxon>
        <taxon>Actinomycetota</taxon>
        <taxon>Actinomycetes</taxon>
        <taxon>Acidothermales</taxon>
        <taxon>Acidothermaceae</taxon>
        <taxon>Acidothermus</taxon>
    </lineage>
</organism>
<feature type="chain" id="PRO_1000006625" description="Aspartate--tRNA(Asp/Asn) ligase">
    <location>
        <begin position="1"/>
        <end position="592"/>
    </location>
</feature>
<feature type="region of interest" description="Aspartate" evidence="1">
    <location>
        <begin position="196"/>
        <end position="199"/>
    </location>
</feature>
<feature type="region of interest" description="Disordered" evidence="2">
    <location>
        <begin position="553"/>
        <end position="592"/>
    </location>
</feature>
<feature type="binding site" evidence="1">
    <location>
        <position position="172"/>
    </location>
    <ligand>
        <name>L-aspartate</name>
        <dbReference type="ChEBI" id="CHEBI:29991"/>
    </ligand>
</feature>
<feature type="binding site" evidence="1">
    <location>
        <begin position="218"/>
        <end position="220"/>
    </location>
    <ligand>
        <name>ATP</name>
        <dbReference type="ChEBI" id="CHEBI:30616"/>
    </ligand>
</feature>
<feature type="binding site" evidence="1">
    <location>
        <position position="218"/>
    </location>
    <ligand>
        <name>L-aspartate</name>
        <dbReference type="ChEBI" id="CHEBI:29991"/>
    </ligand>
</feature>
<feature type="binding site" evidence="1">
    <location>
        <position position="227"/>
    </location>
    <ligand>
        <name>ATP</name>
        <dbReference type="ChEBI" id="CHEBI:30616"/>
    </ligand>
</feature>
<feature type="binding site" evidence="1">
    <location>
        <position position="442"/>
    </location>
    <ligand>
        <name>L-aspartate</name>
        <dbReference type="ChEBI" id="CHEBI:29991"/>
    </ligand>
</feature>
<feature type="binding site" evidence="1">
    <location>
        <position position="476"/>
    </location>
    <ligand>
        <name>ATP</name>
        <dbReference type="ChEBI" id="CHEBI:30616"/>
    </ligand>
</feature>
<feature type="binding site" evidence="1">
    <location>
        <position position="483"/>
    </location>
    <ligand>
        <name>L-aspartate</name>
        <dbReference type="ChEBI" id="CHEBI:29991"/>
    </ligand>
</feature>
<feature type="binding site" evidence="1">
    <location>
        <begin position="528"/>
        <end position="531"/>
    </location>
    <ligand>
        <name>ATP</name>
        <dbReference type="ChEBI" id="CHEBI:30616"/>
    </ligand>
</feature>
<feature type="site" description="Important for tRNA non-discrimination" evidence="1">
    <location>
        <position position="80"/>
    </location>
</feature>
<gene>
    <name evidence="1" type="primary">aspS</name>
    <name type="ordered locus">Acel_1334</name>
</gene>
<proteinExistence type="inferred from homology"/>
<name>SYDND_ACIC1</name>
<reference key="1">
    <citation type="journal article" date="2009" name="Genome Res.">
        <title>Complete genome of the cellulolytic thermophile Acidothermus cellulolyticus 11B provides insights into its ecophysiological and evolutionary adaptations.</title>
        <authorList>
            <person name="Barabote R.D."/>
            <person name="Xie G."/>
            <person name="Leu D.H."/>
            <person name="Normand P."/>
            <person name="Necsulea A."/>
            <person name="Daubin V."/>
            <person name="Medigue C."/>
            <person name="Adney W.S."/>
            <person name="Xu X.C."/>
            <person name="Lapidus A."/>
            <person name="Parales R.E."/>
            <person name="Detter C."/>
            <person name="Pujic P."/>
            <person name="Bruce D."/>
            <person name="Lavire C."/>
            <person name="Challacombe J.F."/>
            <person name="Brettin T.S."/>
            <person name="Berry A.M."/>
        </authorList>
    </citation>
    <scope>NUCLEOTIDE SEQUENCE [LARGE SCALE GENOMIC DNA]</scope>
    <source>
        <strain>ATCC 43068 / DSM 8971 / 11B</strain>
    </source>
</reference>
<protein>
    <recommendedName>
        <fullName evidence="1">Aspartate--tRNA(Asp/Asn) ligase</fullName>
        <ecNumber evidence="1">6.1.1.23</ecNumber>
    </recommendedName>
    <alternativeName>
        <fullName evidence="1">Aspartyl-tRNA synthetase</fullName>
        <shortName evidence="1">AspRS</shortName>
    </alternativeName>
    <alternativeName>
        <fullName evidence="1">Non-discriminating aspartyl-tRNA synthetase</fullName>
        <shortName evidence="1">ND-AspRS</shortName>
    </alternativeName>
</protein>
<comment type="function">
    <text evidence="1">Aspartyl-tRNA synthetase with relaxed tRNA specificity since it is able to aspartylate not only its cognate tRNA(Asp) but also tRNA(Asn). Reaction proceeds in two steps: L-aspartate is first activated by ATP to form Asp-AMP and then transferred to the acceptor end of tRNA(Asp/Asn).</text>
</comment>
<comment type="catalytic activity">
    <reaction evidence="1">
        <text>tRNA(Asx) + L-aspartate + ATP = L-aspartyl-tRNA(Asx) + AMP + diphosphate</text>
        <dbReference type="Rhea" id="RHEA:18349"/>
        <dbReference type="Rhea" id="RHEA-COMP:9710"/>
        <dbReference type="Rhea" id="RHEA-COMP:9711"/>
        <dbReference type="ChEBI" id="CHEBI:29991"/>
        <dbReference type="ChEBI" id="CHEBI:30616"/>
        <dbReference type="ChEBI" id="CHEBI:33019"/>
        <dbReference type="ChEBI" id="CHEBI:78442"/>
        <dbReference type="ChEBI" id="CHEBI:78516"/>
        <dbReference type="ChEBI" id="CHEBI:456215"/>
        <dbReference type="EC" id="6.1.1.23"/>
    </reaction>
</comment>
<comment type="subunit">
    <text evidence="1">Homodimer.</text>
</comment>
<comment type="subcellular location">
    <subcellularLocation>
        <location evidence="1">Cytoplasm</location>
    </subcellularLocation>
</comment>
<comment type="similarity">
    <text evidence="1">Belongs to the class-II aminoacyl-tRNA synthetase family. Type 1 subfamily.</text>
</comment>